<keyword id="KW-0067">ATP-binding</keyword>
<keyword id="KW-0436">Ligase</keyword>
<keyword id="KW-0547">Nucleotide-binding</keyword>
<keyword id="KW-0658">Purine biosynthesis</keyword>
<keyword id="KW-1185">Reference proteome</keyword>
<accession>C6BVA6</accession>
<sequence>MSKHVVETDIKELKLLSRGKVRDIYEVDDDKLLLVTTDRISAYDVIMPNPIDDKGKILNQITLFWMDMFKDIIPNHLIASKVDDYPEVLHKYRDQLEGRSVLVKKAKPLPIECIVRGYITGSGWKDYQKTGEVCGHKLPEGLKESEMLEQPLFTPSTKAELGEHDENISVEKATEMLGKELFDKVQEATLSIYKRGRDYAREKGIIIADTKFEFGIYDGELIIIDEVLTPDSSRFWPVEGYEAGKSQPSFDKQFLRDWLTEINFNKQPPAPEVPEEIATKTRDKYMEAFTLLTESELDA</sequence>
<reference key="1">
    <citation type="submission" date="2009-06" db="EMBL/GenBank/DDBJ databases">
        <title>Complete sequence of Desulfovibrio salexigens DSM 2638.</title>
        <authorList>
            <consortium name="US DOE Joint Genome Institute"/>
            <person name="Lucas S."/>
            <person name="Copeland A."/>
            <person name="Lapidus A."/>
            <person name="Glavina del Rio T."/>
            <person name="Tice H."/>
            <person name="Bruce D."/>
            <person name="Goodwin L."/>
            <person name="Pitluck S."/>
            <person name="Munk A.C."/>
            <person name="Brettin T."/>
            <person name="Detter J.C."/>
            <person name="Han C."/>
            <person name="Tapia R."/>
            <person name="Larimer F."/>
            <person name="Land M."/>
            <person name="Hauser L."/>
            <person name="Kyrpides N."/>
            <person name="Anderson I."/>
            <person name="Wall J.D."/>
            <person name="Arkin A.P."/>
            <person name="Dehal P."/>
            <person name="Chivian D."/>
            <person name="Giles B."/>
            <person name="Hazen T.C."/>
        </authorList>
    </citation>
    <scope>NUCLEOTIDE SEQUENCE [LARGE SCALE GENOMIC DNA]</scope>
    <source>
        <strain>ATCC 14822 / DSM 2638 / NCIMB 8403 / VKM B-1763</strain>
    </source>
</reference>
<feature type="chain" id="PRO_1000203224" description="Phosphoribosylaminoimidazole-succinocarboxamide synthase">
    <location>
        <begin position="1"/>
        <end position="299"/>
    </location>
</feature>
<protein>
    <recommendedName>
        <fullName evidence="1">Phosphoribosylaminoimidazole-succinocarboxamide synthase</fullName>
        <ecNumber evidence="1">6.3.2.6</ecNumber>
    </recommendedName>
    <alternativeName>
        <fullName evidence="1">SAICAR synthetase</fullName>
    </alternativeName>
</protein>
<name>PUR7_MARSD</name>
<evidence type="ECO:0000255" key="1">
    <source>
        <dbReference type="HAMAP-Rule" id="MF_00137"/>
    </source>
</evidence>
<dbReference type="EC" id="6.3.2.6" evidence="1"/>
<dbReference type="EMBL" id="CP001649">
    <property type="protein sequence ID" value="ACS80081.1"/>
    <property type="molecule type" value="Genomic_DNA"/>
</dbReference>
<dbReference type="RefSeq" id="WP_015851897.1">
    <property type="nucleotide sequence ID" value="NC_012881.1"/>
</dbReference>
<dbReference type="SMR" id="C6BVA6"/>
<dbReference type="STRING" id="526222.Desal_2021"/>
<dbReference type="KEGG" id="dsa:Desal_2021"/>
<dbReference type="eggNOG" id="COG0152">
    <property type="taxonomic scope" value="Bacteria"/>
</dbReference>
<dbReference type="HOGENOM" id="CLU_045637_0_0_7"/>
<dbReference type="OrthoDB" id="9801549at2"/>
<dbReference type="UniPathway" id="UPA00074">
    <property type="reaction ID" value="UER00131"/>
</dbReference>
<dbReference type="Proteomes" id="UP000002601">
    <property type="component" value="Chromosome"/>
</dbReference>
<dbReference type="GO" id="GO:0005737">
    <property type="term" value="C:cytoplasm"/>
    <property type="evidence" value="ECO:0007669"/>
    <property type="project" value="TreeGrafter"/>
</dbReference>
<dbReference type="GO" id="GO:0005524">
    <property type="term" value="F:ATP binding"/>
    <property type="evidence" value="ECO:0007669"/>
    <property type="project" value="UniProtKB-KW"/>
</dbReference>
<dbReference type="GO" id="GO:0004639">
    <property type="term" value="F:phosphoribosylaminoimidazolesuccinocarboxamide synthase activity"/>
    <property type="evidence" value="ECO:0007669"/>
    <property type="project" value="UniProtKB-UniRule"/>
</dbReference>
<dbReference type="GO" id="GO:0006189">
    <property type="term" value="P:'de novo' IMP biosynthetic process"/>
    <property type="evidence" value="ECO:0007669"/>
    <property type="project" value="UniProtKB-UniRule"/>
</dbReference>
<dbReference type="CDD" id="cd01414">
    <property type="entry name" value="SAICAR_synt_Sc"/>
    <property type="match status" value="1"/>
</dbReference>
<dbReference type="FunFam" id="3.30.200.20:FF:000392">
    <property type="entry name" value="Phosphoribosylaminoimidazole-succinocarboxamide synthase"/>
    <property type="match status" value="1"/>
</dbReference>
<dbReference type="FunFam" id="3.30.470.20:FF:000015">
    <property type="entry name" value="Phosphoribosylaminoimidazole-succinocarboxamide synthase"/>
    <property type="match status" value="1"/>
</dbReference>
<dbReference type="Gene3D" id="3.30.470.20">
    <property type="entry name" value="ATP-grasp fold, B domain"/>
    <property type="match status" value="1"/>
</dbReference>
<dbReference type="Gene3D" id="3.30.200.20">
    <property type="entry name" value="Phosphorylase Kinase, domain 1"/>
    <property type="match status" value="1"/>
</dbReference>
<dbReference type="HAMAP" id="MF_00137">
    <property type="entry name" value="SAICAR_synth"/>
    <property type="match status" value="1"/>
</dbReference>
<dbReference type="InterPro" id="IPR028923">
    <property type="entry name" value="SAICAR_synt/ADE2_N"/>
</dbReference>
<dbReference type="InterPro" id="IPR001636">
    <property type="entry name" value="SAICAR_synth"/>
</dbReference>
<dbReference type="InterPro" id="IPR018236">
    <property type="entry name" value="SAICAR_synthetase_CS"/>
</dbReference>
<dbReference type="NCBIfam" id="NF010568">
    <property type="entry name" value="PRK13961.1"/>
    <property type="match status" value="1"/>
</dbReference>
<dbReference type="NCBIfam" id="TIGR00081">
    <property type="entry name" value="purC"/>
    <property type="match status" value="1"/>
</dbReference>
<dbReference type="PANTHER" id="PTHR43700">
    <property type="entry name" value="PHOSPHORIBOSYLAMINOIMIDAZOLE-SUCCINOCARBOXAMIDE SYNTHASE"/>
    <property type="match status" value="1"/>
</dbReference>
<dbReference type="PANTHER" id="PTHR43700:SF1">
    <property type="entry name" value="PHOSPHORIBOSYLAMINOIMIDAZOLE-SUCCINOCARBOXAMIDE SYNTHASE"/>
    <property type="match status" value="1"/>
</dbReference>
<dbReference type="Pfam" id="PF01259">
    <property type="entry name" value="SAICAR_synt"/>
    <property type="match status" value="1"/>
</dbReference>
<dbReference type="SUPFAM" id="SSF56104">
    <property type="entry name" value="SAICAR synthase-like"/>
    <property type="match status" value="1"/>
</dbReference>
<dbReference type="PROSITE" id="PS01057">
    <property type="entry name" value="SAICAR_SYNTHETASE_1"/>
    <property type="match status" value="1"/>
</dbReference>
<dbReference type="PROSITE" id="PS01058">
    <property type="entry name" value="SAICAR_SYNTHETASE_2"/>
    <property type="match status" value="1"/>
</dbReference>
<organism>
    <name type="scientific">Maridesulfovibrio salexigens (strain ATCC 14822 / DSM 2638 / NCIMB 8403 / VKM B-1763)</name>
    <name type="common">Desulfovibrio salexigens</name>
    <dbReference type="NCBI Taxonomy" id="526222"/>
    <lineage>
        <taxon>Bacteria</taxon>
        <taxon>Pseudomonadati</taxon>
        <taxon>Thermodesulfobacteriota</taxon>
        <taxon>Desulfovibrionia</taxon>
        <taxon>Desulfovibrionales</taxon>
        <taxon>Desulfovibrionaceae</taxon>
        <taxon>Maridesulfovibrio</taxon>
    </lineage>
</organism>
<comment type="catalytic activity">
    <reaction evidence="1">
        <text>5-amino-1-(5-phospho-D-ribosyl)imidazole-4-carboxylate + L-aspartate + ATP = (2S)-2-[5-amino-1-(5-phospho-beta-D-ribosyl)imidazole-4-carboxamido]succinate + ADP + phosphate + 2 H(+)</text>
        <dbReference type="Rhea" id="RHEA:22628"/>
        <dbReference type="ChEBI" id="CHEBI:15378"/>
        <dbReference type="ChEBI" id="CHEBI:29991"/>
        <dbReference type="ChEBI" id="CHEBI:30616"/>
        <dbReference type="ChEBI" id="CHEBI:43474"/>
        <dbReference type="ChEBI" id="CHEBI:58443"/>
        <dbReference type="ChEBI" id="CHEBI:77657"/>
        <dbReference type="ChEBI" id="CHEBI:456216"/>
        <dbReference type="EC" id="6.3.2.6"/>
    </reaction>
</comment>
<comment type="pathway">
    <text evidence="1">Purine metabolism; IMP biosynthesis via de novo pathway; 5-amino-1-(5-phospho-D-ribosyl)imidazole-4-carboxamide from 5-amino-1-(5-phospho-D-ribosyl)imidazole-4-carboxylate: step 1/2.</text>
</comment>
<comment type="similarity">
    <text evidence="1">Belongs to the SAICAR synthetase family.</text>
</comment>
<gene>
    <name evidence="1" type="primary">purC</name>
    <name type="ordered locus">Desal_2021</name>
</gene>
<proteinExistence type="inferred from homology"/>